<feature type="chain" id="PRO_0000395788" description="Lon protease homolog 2, peroxisomal">
    <location>
        <begin position="1"/>
        <end position="1004"/>
    </location>
</feature>
<feature type="domain" description="Lon N-terminal" evidence="3">
    <location>
        <begin position="15"/>
        <end position="296"/>
    </location>
</feature>
<feature type="domain" description="Lon proteolytic" evidence="2">
    <location>
        <begin position="773"/>
        <end position="987"/>
    </location>
</feature>
<feature type="region of interest" description="Disordered" evidence="4">
    <location>
        <begin position="340"/>
        <end position="374"/>
    </location>
</feature>
<feature type="short sequence motif" description="Microbody targeting signal" evidence="1">
    <location>
        <begin position="1002"/>
        <end position="1004"/>
    </location>
</feature>
<feature type="compositionally biased region" description="Low complexity" evidence="4">
    <location>
        <begin position="357"/>
        <end position="367"/>
    </location>
</feature>
<feature type="active site" evidence="1">
    <location>
        <position position="872"/>
    </location>
</feature>
<feature type="active site" evidence="1">
    <location>
        <position position="915"/>
    </location>
</feature>
<feature type="binding site" evidence="1">
    <location>
        <begin position="519"/>
        <end position="526"/>
    </location>
    <ligand>
        <name>ATP</name>
        <dbReference type="ChEBI" id="CHEBI:30616"/>
    </ligand>
</feature>
<comment type="function">
    <text evidence="1">ATP-dependent serine protease that mediates the selective degradation of misfolded and unassembled polypeptides in the peroxisomal matrix. Necessary for type 2 peroxisome targeting signal (PTS2)-containing protein processing and facilitates peroxisome matrix protein import.</text>
</comment>
<comment type="catalytic activity">
    <reaction evidence="1">
        <text>Hydrolysis of proteins in presence of ATP.</text>
        <dbReference type="EC" id="3.4.21.53"/>
    </reaction>
</comment>
<comment type="subcellular location">
    <subcellularLocation>
        <location evidence="1">Peroxisome matrix</location>
    </subcellularLocation>
</comment>
<comment type="similarity">
    <text evidence="1">Belongs to the peptidase S16 family.</text>
</comment>
<organism>
    <name type="scientific">Eremothecium gossypii (strain ATCC 10895 / CBS 109.51 / FGSC 9923 / NRRL Y-1056)</name>
    <name type="common">Yeast</name>
    <name type="synonym">Ashbya gossypii</name>
    <dbReference type="NCBI Taxonomy" id="284811"/>
    <lineage>
        <taxon>Eukaryota</taxon>
        <taxon>Fungi</taxon>
        <taxon>Dikarya</taxon>
        <taxon>Ascomycota</taxon>
        <taxon>Saccharomycotina</taxon>
        <taxon>Saccharomycetes</taxon>
        <taxon>Saccharomycetales</taxon>
        <taxon>Saccharomycetaceae</taxon>
        <taxon>Eremothecium</taxon>
    </lineage>
</organism>
<reference key="1">
    <citation type="journal article" date="2004" name="Science">
        <title>The Ashbya gossypii genome as a tool for mapping the ancient Saccharomyces cerevisiae genome.</title>
        <authorList>
            <person name="Dietrich F.S."/>
            <person name="Voegeli S."/>
            <person name="Brachat S."/>
            <person name="Lerch A."/>
            <person name="Gates K."/>
            <person name="Steiner S."/>
            <person name="Mohr C."/>
            <person name="Poehlmann R."/>
            <person name="Luedi P."/>
            <person name="Choi S."/>
            <person name="Wing R.A."/>
            <person name="Flavier A."/>
            <person name="Gaffney T.D."/>
            <person name="Philippsen P."/>
        </authorList>
    </citation>
    <scope>NUCLEOTIDE SEQUENCE [LARGE SCALE GENOMIC DNA]</scope>
    <source>
        <strain>ATCC 10895 / CBS 109.51 / FGSC 9923 / NRRL Y-1056</strain>
    </source>
</reference>
<reference key="2">
    <citation type="journal article" date="2013" name="G3 (Bethesda)">
        <title>Genomes of Ashbya fungi isolated from insects reveal four mating-type loci, numerous translocations, lack of transposons, and distinct gene duplications.</title>
        <authorList>
            <person name="Dietrich F.S."/>
            <person name="Voegeli S."/>
            <person name="Kuo S."/>
            <person name="Philippsen P."/>
        </authorList>
    </citation>
    <scope>GENOME REANNOTATION</scope>
    <source>
        <strain>ATCC 10895 / CBS 109.51 / FGSC 9923 / NRRL Y-1056</strain>
    </source>
</reference>
<proteinExistence type="inferred from homology"/>
<keyword id="KW-0067">ATP-binding</keyword>
<keyword id="KW-0378">Hydrolase</keyword>
<keyword id="KW-0547">Nucleotide-binding</keyword>
<keyword id="KW-0576">Peroxisome</keyword>
<keyword id="KW-0645">Protease</keyword>
<keyword id="KW-1185">Reference proteome</keyword>
<keyword id="KW-0720">Serine protease</keyword>
<gene>
    <name type="ordered locus">AFL121W</name>
</gene>
<sequence length="1004" mass="109780">MGLFGKDRGERIAEFPCYLLETGTHLVPLPGILYNLVIERTYGERILGQFRGIGEAVDGALTGAGEAAEVPGRVAEVMKAFQERYDSGDKTQAVYICLVTEAAAGRHIGCIARLTGARAEGGELSVLLRGLVRAVVGQPVPSRRNEMWNGSVTVLDDAQRVATWGARQLDFARQGVFGAFEELDAGIGTFTARFKSSQKRGADGAAHLLTLSPLANTLFFHFSRSSFERSWKILRTMMHGFRDAKKDIRTAMDMLSVADLTVGLLPTTTAQRLEFLQAEDPAARIKTFVRHMQQLLEVFGSLYRATEYVHDRFETHGPIAKSQLIANQLRSLRFYIDDIKRNKPESGPGGRSRRLLPRPASGNSAAAGEEDDSEDSELVAIKRYVDEIEVKGVHADGVKMLKKDYRSLSKMHVQSTEYQMLRNYFDFIMGIPFGIYVSTPEIDLVASSRKLDNDHYGLVQVKKRLLEYLCVLKLSANSPGVTADAGAIEDGSATKRAVVYENKAQEQRKTKVPFLLLVGPPGVGKTSVAKSVADVLGRRFQRISLGGIHNEAEIRGHRRTYVGAMAGMIVNALCKAGCMNPLILLDEIDKVLSVPAGAGASRLNGDPGAALLEVLDPEQNHTFTDHYVGFPVDLSQVLFFCTANDLSGMSEPLVDRMEVIHIEGYTYEEKIAIGRHFLLPKQIRLNSFDMTGINLSLTDDAWRTVVVDYTREAGVRNLDRQLGAIVRGKIVEYVENNMSGSGDDVVTQKNLPKFLGLPPHSLREEVTQTTSFAEKYGVVHGLSYNSDGTGGVLVFEVIRSGDSRDKRLTVQTTGNLGTVLSESVSIATSLVKSLLARHVVHSSADDTSVAEFFRSECHLHVPFGAVPKDGPSAGAAISLALLSLALKRPVDPALCVTGEITLRGKILPVGGVKEKLLAAQLQGMGLALVPRGNRNDLVELAEDNAETQQRLLADPALPELATLQHKLGMAVHYCSDFRDLVLHAWPTADNLWHACEDSSVRPQL</sequence>
<accession>Q755E4</accession>
<name>LONP2_EREGS</name>
<evidence type="ECO:0000255" key="1">
    <source>
        <dbReference type="HAMAP-Rule" id="MF_03121"/>
    </source>
</evidence>
<evidence type="ECO:0000255" key="2">
    <source>
        <dbReference type="PROSITE-ProRule" id="PRU01122"/>
    </source>
</evidence>
<evidence type="ECO:0000255" key="3">
    <source>
        <dbReference type="PROSITE-ProRule" id="PRU01123"/>
    </source>
</evidence>
<evidence type="ECO:0000256" key="4">
    <source>
        <dbReference type="SAM" id="MobiDB-lite"/>
    </source>
</evidence>
<dbReference type="EC" id="3.4.21.53" evidence="1"/>
<dbReference type="EMBL" id="AE016819">
    <property type="protein sequence ID" value="AAS53253.2"/>
    <property type="molecule type" value="Genomic_DNA"/>
</dbReference>
<dbReference type="RefSeq" id="NP_985429.2">
    <property type="nucleotide sequence ID" value="NM_210783.2"/>
</dbReference>
<dbReference type="SMR" id="Q755E4"/>
<dbReference type="STRING" id="284811.Q755E4"/>
<dbReference type="EnsemblFungi" id="AAS53253">
    <property type="protein sequence ID" value="AAS53253"/>
    <property type="gene ID" value="AGOS_AFL121W"/>
</dbReference>
<dbReference type="GeneID" id="4621656"/>
<dbReference type="KEGG" id="ago:AGOS_AFL121W"/>
<dbReference type="eggNOG" id="KOG2004">
    <property type="taxonomic scope" value="Eukaryota"/>
</dbReference>
<dbReference type="HOGENOM" id="CLU_004109_4_0_1"/>
<dbReference type="InParanoid" id="Q755E4"/>
<dbReference type="OMA" id="RCMNPVI"/>
<dbReference type="OrthoDB" id="2411602at2759"/>
<dbReference type="Proteomes" id="UP000000591">
    <property type="component" value="Chromosome VI"/>
</dbReference>
<dbReference type="GO" id="GO:0005782">
    <property type="term" value="C:peroxisomal matrix"/>
    <property type="evidence" value="ECO:0000318"/>
    <property type="project" value="GO_Central"/>
</dbReference>
<dbReference type="GO" id="GO:0005524">
    <property type="term" value="F:ATP binding"/>
    <property type="evidence" value="ECO:0007669"/>
    <property type="project" value="UniProtKB-UniRule"/>
</dbReference>
<dbReference type="GO" id="GO:0016887">
    <property type="term" value="F:ATP hydrolysis activity"/>
    <property type="evidence" value="ECO:0007669"/>
    <property type="project" value="UniProtKB-UniRule"/>
</dbReference>
<dbReference type="GO" id="GO:0004176">
    <property type="term" value="F:ATP-dependent peptidase activity"/>
    <property type="evidence" value="ECO:0007669"/>
    <property type="project" value="UniProtKB-UniRule"/>
</dbReference>
<dbReference type="GO" id="GO:0004252">
    <property type="term" value="F:serine-type endopeptidase activity"/>
    <property type="evidence" value="ECO:0007669"/>
    <property type="project" value="UniProtKB-UniRule"/>
</dbReference>
<dbReference type="GO" id="GO:0016558">
    <property type="term" value="P:protein import into peroxisome matrix"/>
    <property type="evidence" value="ECO:0007669"/>
    <property type="project" value="UniProtKB-UniRule"/>
</dbReference>
<dbReference type="GO" id="GO:0016485">
    <property type="term" value="P:protein processing"/>
    <property type="evidence" value="ECO:0000318"/>
    <property type="project" value="GO_Central"/>
</dbReference>
<dbReference type="GO" id="GO:0006515">
    <property type="term" value="P:protein quality control for misfolded or incompletely synthesized proteins"/>
    <property type="evidence" value="ECO:0007669"/>
    <property type="project" value="UniProtKB-UniRule"/>
</dbReference>
<dbReference type="GO" id="GO:0006625">
    <property type="term" value="P:protein targeting to peroxisome"/>
    <property type="evidence" value="ECO:0000318"/>
    <property type="project" value="GO_Central"/>
</dbReference>
<dbReference type="CDD" id="cd19500">
    <property type="entry name" value="RecA-like_Lon"/>
    <property type="match status" value="1"/>
</dbReference>
<dbReference type="Gene3D" id="1.10.8.60">
    <property type="match status" value="1"/>
</dbReference>
<dbReference type="Gene3D" id="3.30.230.10">
    <property type="match status" value="1"/>
</dbReference>
<dbReference type="Gene3D" id="3.40.50.300">
    <property type="entry name" value="P-loop containing nucleotide triphosphate hydrolases"/>
    <property type="match status" value="1"/>
</dbReference>
<dbReference type="HAMAP" id="MF_03121">
    <property type="entry name" value="lonp2_euk"/>
    <property type="match status" value="1"/>
</dbReference>
<dbReference type="InterPro" id="IPR003593">
    <property type="entry name" value="AAA+_ATPase"/>
</dbReference>
<dbReference type="InterPro" id="IPR003959">
    <property type="entry name" value="ATPase_AAA_core"/>
</dbReference>
<dbReference type="InterPro" id="IPR054594">
    <property type="entry name" value="Lon_lid"/>
</dbReference>
<dbReference type="InterPro" id="IPR008269">
    <property type="entry name" value="Lon_proteolytic"/>
</dbReference>
<dbReference type="InterPro" id="IPR027065">
    <property type="entry name" value="Lon_Prtase"/>
</dbReference>
<dbReference type="InterPro" id="IPR003111">
    <property type="entry name" value="Lon_prtase_N"/>
</dbReference>
<dbReference type="InterPro" id="IPR027501">
    <property type="entry name" value="Lonp2_euk"/>
</dbReference>
<dbReference type="InterPro" id="IPR027417">
    <property type="entry name" value="P-loop_NTPase"/>
</dbReference>
<dbReference type="InterPro" id="IPR008268">
    <property type="entry name" value="Peptidase_S16_AS"/>
</dbReference>
<dbReference type="InterPro" id="IPR020568">
    <property type="entry name" value="Ribosomal_Su5_D2-typ_SF"/>
</dbReference>
<dbReference type="InterPro" id="IPR014721">
    <property type="entry name" value="Ribsml_uS5_D2-typ_fold_subgr"/>
</dbReference>
<dbReference type="PANTHER" id="PTHR10046">
    <property type="entry name" value="ATP DEPENDENT LON PROTEASE FAMILY MEMBER"/>
    <property type="match status" value="1"/>
</dbReference>
<dbReference type="Pfam" id="PF00004">
    <property type="entry name" value="AAA"/>
    <property type="match status" value="1"/>
</dbReference>
<dbReference type="Pfam" id="PF05362">
    <property type="entry name" value="Lon_C"/>
    <property type="match status" value="1"/>
</dbReference>
<dbReference type="Pfam" id="PF22667">
    <property type="entry name" value="Lon_lid"/>
    <property type="match status" value="1"/>
</dbReference>
<dbReference type="PRINTS" id="PR00830">
    <property type="entry name" value="ENDOLAPTASE"/>
</dbReference>
<dbReference type="SMART" id="SM00382">
    <property type="entry name" value="AAA"/>
    <property type="match status" value="1"/>
</dbReference>
<dbReference type="SUPFAM" id="SSF52540">
    <property type="entry name" value="P-loop containing nucleoside triphosphate hydrolases"/>
    <property type="match status" value="1"/>
</dbReference>
<dbReference type="SUPFAM" id="SSF54211">
    <property type="entry name" value="Ribosomal protein S5 domain 2-like"/>
    <property type="match status" value="1"/>
</dbReference>
<dbReference type="PROSITE" id="PS51787">
    <property type="entry name" value="LON_N"/>
    <property type="match status" value="1"/>
</dbReference>
<dbReference type="PROSITE" id="PS51786">
    <property type="entry name" value="LON_PROTEOLYTIC"/>
    <property type="match status" value="1"/>
</dbReference>
<dbReference type="PROSITE" id="PS01046">
    <property type="entry name" value="LON_SER"/>
    <property type="match status" value="1"/>
</dbReference>
<protein>
    <recommendedName>
        <fullName evidence="1">Lon protease homolog 2, peroxisomal</fullName>
        <ecNumber evidence="1">3.4.21.53</ecNumber>
    </recommendedName>
</protein>